<dbReference type="EMBL" id="CP000254">
    <property type="protein sequence ID" value="ABD41939.1"/>
    <property type="molecule type" value="Genomic_DNA"/>
</dbReference>
<dbReference type="RefSeq" id="WP_011449197.1">
    <property type="nucleotide sequence ID" value="NC_007796.1"/>
</dbReference>
<dbReference type="SMR" id="Q2FSH0"/>
<dbReference type="FunCoup" id="Q2FSH0">
    <property type="interactions" value="169"/>
</dbReference>
<dbReference type="STRING" id="323259.Mhun_2234"/>
<dbReference type="EnsemblBacteria" id="ABD41939">
    <property type="protein sequence ID" value="ABD41939"/>
    <property type="gene ID" value="Mhun_2234"/>
</dbReference>
<dbReference type="GeneID" id="3924102"/>
<dbReference type="KEGG" id="mhu:Mhun_2234"/>
<dbReference type="eggNOG" id="arCOG04088">
    <property type="taxonomic scope" value="Archaea"/>
</dbReference>
<dbReference type="HOGENOM" id="CLU_056222_2_0_2"/>
<dbReference type="InParanoid" id="Q2FSH0"/>
<dbReference type="OrthoDB" id="8644at2157"/>
<dbReference type="Proteomes" id="UP000001941">
    <property type="component" value="Chromosome"/>
</dbReference>
<dbReference type="GO" id="GO:0022625">
    <property type="term" value="C:cytosolic large ribosomal subunit"/>
    <property type="evidence" value="ECO:0007669"/>
    <property type="project" value="TreeGrafter"/>
</dbReference>
<dbReference type="GO" id="GO:0008097">
    <property type="term" value="F:5S rRNA binding"/>
    <property type="evidence" value="ECO:0007669"/>
    <property type="project" value="InterPro"/>
</dbReference>
<dbReference type="GO" id="GO:0003735">
    <property type="term" value="F:structural constituent of ribosome"/>
    <property type="evidence" value="ECO:0007669"/>
    <property type="project" value="InterPro"/>
</dbReference>
<dbReference type="GO" id="GO:0000027">
    <property type="term" value="P:ribosomal large subunit assembly"/>
    <property type="evidence" value="ECO:0007669"/>
    <property type="project" value="TreeGrafter"/>
</dbReference>
<dbReference type="GO" id="GO:0006412">
    <property type="term" value="P:translation"/>
    <property type="evidence" value="ECO:0007669"/>
    <property type="project" value="UniProtKB-UniRule"/>
</dbReference>
<dbReference type="CDD" id="cd00432">
    <property type="entry name" value="Ribosomal_L18_L5e"/>
    <property type="match status" value="1"/>
</dbReference>
<dbReference type="Gene3D" id="3.30.420.100">
    <property type="match status" value="1"/>
</dbReference>
<dbReference type="HAMAP" id="MF_01337_A">
    <property type="entry name" value="Ribosomal_uL18_A"/>
    <property type="match status" value="1"/>
</dbReference>
<dbReference type="InterPro" id="IPR005485">
    <property type="entry name" value="Rbsml_uL18_euk"/>
</dbReference>
<dbReference type="NCBIfam" id="NF006342">
    <property type="entry name" value="PRK08569.1"/>
    <property type="match status" value="1"/>
</dbReference>
<dbReference type="PANTHER" id="PTHR23410:SF12">
    <property type="entry name" value="LARGE RIBOSOMAL SUBUNIT PROTEIN UL18"/>
    <property type="match status" value="1"/>
</dbReference>
<dbReference type="PANTHER" id="PTHR23410">
    <property type="entry name" value="RIBOSOMAL PROTEIN L5-RELATED"/>
    <property type="match status" value="1"/>
</dbReference>
<dbReference type="Pfam" id="PF17144">
    <property type="entry name" value="Ribosomal_L5e"/>
    <property type="match status" value="2"/>
</dbReference>
<dbReference type="PRINTS" id="PR00058">
    <property type="entry name" value="RIBOSOMALL5"/>
</dbReference>
<dbReference type="SUPFAM" id="SSF53137">
    <property type="entry name" value="Translational machinery components"/>
    <property type="match status" value="1"/>
</dbReference>
<name>RL18_METHJ</name>
<organism>
    <name type="scientific">Methanospirillum hungatei JF-1 (strain ATCC 27890 / DSM 864 / NBRC 100397 / JF-1)</name>
    <dbReference type="NCBI Taxonomy" id="323259"/>
    <lineage>
        <taxon>Archaea</taxon>
        <taxon>Methanobacteriati</taxon>
        <taxon>Methanobacteriota</taxon>
        <taxon>Stenosarchaea group</taxon>
        <taxon>Methanomicrobia</taxon>
        <taxon>Methanomicrobiales</taxon>
        <taxon>Methanospirillaceae</taxon>
        <taxon>Methanospirillum</taxon>
    </lineage>
</organism>
<gene>
    <name evidence="1" type="primary">rpl18</name>
    <name type="ordered locus">Mhun_2234</name>
</gene>
<evidence type="ECO:0000255" key="1">
    <source>
        <dbReference type="HAMAP-Rule" id="MF_01337"/>
    </source>
</evidence>
<evidence type="ECO:0000305" key="2"/>
<sequence length="175" mass="19114">MATGPRYFVAFRRRREGRTNYHARTRLVVATKPRMVVRKTNRHIICQIITAHMEGDRTHVAANSSELRKFGYEGSLNNTPAAYLTGMLLAVRALKAGQEGAILDIGLHRATPGARVFAALKGAVEAGFDIPHNEEILPADERCKGEHIAEYAPDRAGNLPANVAATVDAIMGELN</sequence>
<protein>
    <recommendedName>
        <fullName evidence="1">Large ribosomal subunit protein uL18</fullName>
    </recommendedName>
    <alternativeName>
        <fullName evidence="2">50S ribosomal protein L18</fullName>
    </alternativeName>
</protein>
<comment type="function">
    <text evidence="1">This is one of the proteins that bind and probably mediate the attachment of the 5S RNA into the large ribosomal subunit, where it forms part of the central protuberance.</text>
</comment>
<comment type="subunit">
    <text evidence="1">Part of the 50S ribosomal subunit. Contacts the 5S and 23S rRNAs.</text>
</comment>
<comment type="similarity">
    <text evidence="1">Belongs to the universal ribosomal protein uL18 family.</text>
</comment>
<keyword id="KW-1185">Reference proteome</keyword>
<keyword id="KW-0687">Ribonucleoprotein</keyword>
<keyword id="KW-0689">Ribosomal protein</keyword>
<keyword id="KW-0694">RNA-binding</keyword>
<keyword id="KW-0699">rRNA-binding</keyword>
<feature type="chain" id="PRO_0000251399" description="Large ribosomal subunit protein uL18">
    <location>
        <begin position="1"/>
        <end position="175"/>
    </location>
</feature>
<accession>Q2FSH0</accession>
<reference key="1">
    <citation type="journal article" date="2016" name="Stand. Genomic Sci.">
        <title>Complete genome sequence of Methanospirillum hungatei type strain JF1.</title>
        <authorList>
            <person name="Gunsalus R.P."/>
            <person name="Cook L.E."/>
            <person name="Crable B."/>
            <person name="Rohlin L."/>
            <person name="McDonald E."/>
            <person name="Mouttaki H."/>
            <person name="Sieber J.R."/>
            <person name="Poweleit N."/>
            <person name="Zhou H."/>
            <person name="Lapidus A.L."/>
            <person name="Daligault H.E."/>
            <person name="Land M."/>
            <person name="Gilna P."/>
            <person name="Ivanova N."/>
            <person name="Kyrpides N."/>
            <person name="Culley D.E."/>
            <person name="McInerney M.J."/>
        </authorList>
    </citation>
    <scope>NUCLEOTIDE SEQUENCE [LARGE SCALE GENOMIC DNA]</scope>
    <source>
        <strain>ATCC 27890 / DSM 864 / NBRC 100397 / JF-1</strain>
    </source>
</reference>
<proteinExistence type="inferred from homology"/>